<gene>
    <name evidence="1" type="primary">rnpA</name>
    <name type="ordered locus">GM21_4151</name>
</gene>
<keyword id="KW-0255">Endonuclease</keyword>
<keyword id="KW-0378">Hydrolase</keyword>
<keyword id="KW-0540">Nuclease</keyword>
<keyword id="KW-0694">RNA-binding</keyword>
<keyword id="KW-0819">tRNA processing</keyword>
<reference key="1">
    <citation type="submission" date="2009-07" db="EMBL/GenBank/DDBJ databases">
        <title>Complete sequence of Geobacter sp. M21.</title>
        <authorList>
            <consortium name="US DOE Joint Genome Institute"/>
            <person name="Lucas S."/>
            <person name="Copeland A."/>
            <person name="Lapidus A."/>
            <person name="Glavina del Rio T."/>
            <person name="Dalin E."/>
            <person name="Tice H."/>
            <person name="Bruce D."/>
            <person name="Goodwin L."/>
            <person name="Pitluck S."/>
            <person name="Saunders E."/>
            <person name="Brettin T."/>
            <person name="Detter J.C."/>
            <person name="Han C."/>
            <person name="Larimer F."/>
            <person name="Land M."/>
            <person name="Hauser L."/>
            <person name="Kyrpides N."/>
            <person name="Ovchinnikova G."/>
            <person name="Lovley D."/>
        </authorList>
    </citation>
    <scope>NUCLEOTIDE SEQUENCE [LARGE SCALE GENOMIC DNA]</scope>
    <source>
        <strain>M21</strain>
    </source>
</reference>
<comment type="function">
    <text evidence="1">RNaseP catalyzes the removal of the 5'-leader sequence from pre-tRNA to produce the mature 5'-terminus. It can also cleave other RNA substrates such as 4.5S RNA. The protein component plays an auxiliary but essential role in vivo by binding to the 5'-leader sequence and broadening the substrate specificity of the ribozyme.</text>
</comment>
<comment type="catalytic activity">
    <reaction evidence="1">
        <text>Endonucleolytic cleavage of RNA, removing 5'-extranucleotides from tRNA precursor.</text>
        <dbReference type="EC" id="3.1.26.5"/>
    </reaction>
</comment>
<comment type="subunit">
    <text evidence="1">Consists of a catalytic RNA component (M1 or rnpB) and a protein subunit.</text>
</comment>
<comment type="similarity">
    <text evidence="1">Belongs to the RnpA family.</text>
</comment>
<sequence>MTSSNFPKAERLLRRPEFLQFNEGASKLHTQHFLVLLKLKEGTGTRVGFTVSKKVGNAVVRNSIKRRLREFYRQNKSLFILADINIVAKKGADVLDFQQISTELAAAFGRLRKKYA</sequence>
<accession>C6DYS3</accession>
<proteinExistence type="inferred from homology"/>
<protein>
    <recommendedName>
        <fullName evidence="1">Ribonuclease P protein component</fullName>
        <shortName evidence="1">RNase P protein</shortName>
        <shortName evidence="1">RNaseP protein</shortName>
        <ecNumber evidence="1">3.1.26.5</ecNumber>
    </recommendedName>
    <alternativeName>
        <fullName evidence="1">Protein C5</fullName>
    </alternativeName>
</protein>
<evidence type="ECO:0000255" key="1">
    <source>
        <dbReference type="HAMAP-Rule" id="MF_00227"/>
    </source>
</evidence>
<organism>
    <name type="scientific">Geobacter sp. (strain M21)</name>
    <dbReference type="NCBI Taxonomy" id="443144"/>
    <lineage>
        <taxon>Bacteria</taxon>
        <taxon>Pseudomonadati</taxon>
        <taxon>Thermodesulfobacteriota</taxon>
        <taxon>Desulfuromonadia</taxon>
        <taxon>Geobacterales</taxon>
        <taxon>Geobacteraceae</taxon>
        <taxon>Geobacter</taxon>
    </lineage>
</organism>
<name>RNPA_GEOSM</name>
<dbReference type="EC" id="3.1.26.5" evidence="1"/>
<dbReference type="EMBL" id="CP001661">
    <property type="protein sequence ID" value="ACT20166.1"/>
    <property type="molecule type" value="Genomic_DNA"/>
</dbReference>
<dbReference type="SMR" id="C6DYS3"/>
<dbReference type="STRING" id="443144.GM21_4151"/>
<dbReference type="KEGG" id="gem:GM21_4151"/>
<dbReference type="eggNOG" id="COG0594">
    <property type="taxonomic scope" value="Bacteria"/>
</dbReference>
<dbReference type="HOGENOM" id="CLU_117179_9_2_7"/>
<dbReference type="OrthoDB" id="9810867at2"/>
<dbReference type="GO" id="GO:0030677">
    <property type="term" value="C:ribonuclease P complex"/>
    <property type="evidence" value="ECO:0007669"/>
    <property type="project" value="TreeGrafter"/>
</dbReference>
<dbReference type="GO" id="GO:0042781">
    <property type="term" value="F:3'-tRNA processing endoribonuclease activity"/>
    <property type="evidence" value="ECO:0007669"/>
    <property type="project" value="TreeGrafter"/>
</dbReference>
<dbReference type="GO" id="GO:0004526">
    <property type="term" value="F:ribonuclease P activity"/>
    <property type="evidence" value="ECO:0007669"/>
    <property type="project" value="UniProtKB-UniRule"/>
</dbReference>
<dbReference type="GO" id="GO:0000049">
    <property type="term" value="F:tRNA binding"/>
    <property type="evidence" value="ECO:0007669"/>
    <property type="project" value="UniProtKB-UniRule"/>
</dbReference>
<dbReference type="GO" id="GO:0001682">
    <property type="term" value="P:tRNA 5'-leader removal"/>
    <property type="evidence" value="ECO:0007669"/>
    <property type="project" value="UniProtKB-UniRule"/>
</dbReference>
<dbReference type="Gene3D" id="3.30.230.10">
    <property type="match status" value="1"/>
</dbReference>
<dbReference type="HAMAP" id="MF_00227">
    <property type="entry name" value="RNase_P"/>
    <property type="match status" value="1"/>
</dbReference>
<dbReference type="InterPro" id="IPR020568">
    <property type="entry name" value="Ribosomal_Su5_D2-typ_SF"/>
</dbReference>
<dbReference type="InterPro" id="IPR014721">
    <property type="entry name" value="Ribsml_uS5_D2-typ_fold_subgr"/>
</dbReference>
<dbReference type="InterPro" id="IPR000100">
    <property type="entry name" value="RNase_P"/>
</dbReference>
<dbReference type="NCBIfam" id="TIGR00188">
    <property type="entry name" value="rnpA"/>
    <property type="match status" value="1"/>
</dbReference>
<dbReference type="PANTHER" id="PTHR33992">
    <property type="entry name" value="RIBONUCLEASE P PROTEIN COMPONENT"/>
    <property type="match status" value="1"/>
</dbReference>
<dbReference type="PANTHER" id="PTHR33992:SF1">
    <property type="entry name" value="RIBONUCLEASE P PROTEIN COMPONENT"/>
    <property type="match status" value="1"/>
</dbReference>
<dbReference type="Pfam" id="PF00825">
    <property type="entry name" value="Ribonuclease_P"/>
    <property type="match status" value="1"/>
</dbReference>
<dbReference type="SUPFAM" id="SSF54211">
    <property type="entry name" value="Ribosomal protein S5 domain 2-like"/>
    <property type="match status" value="1"/>
</dbReference>
<feature type="chain" id="PRO_1000204347" description="Ribonuclease P protein component">
    <location>
        <begin position="1"/>
        <end position="116"/>
    </location>
</feature>